<gene>
    <name evidence="1" type="primary">tdcD</name>
    <name type="ordered locus">c3873</name>
</gene>
<name>TDCD_ECOL6</name>
<sequence>MNEFPVVLVINCGSSSIKFSVLNASDCEVLMSGIADGINSENAFLSVNGGEPAPLAHHSYEGALKAIAFELEKRNLNDNVALIGHRIAHGGSIFTESAIITDEVIDNIRRVSPLAPLHNYANLSGIESAQQLFPGVTQVAVFDTSFHQTMAPEAYLYGLPWKYYEELGVRRYGFHGTSHRYVSQRAHSLLNLAEDDSGLVVAHLGNGASICAVRNGQSVDTSMGMTPLEGLMMGTRSGDVDFGAMSWVASQTNQSLGDLERVVNKESGLLGISGLSSDLRVLEKAWHEGHERAQLAIKTFVHRIARHIAGHAASLHRLDGIIFTGGIGENSSLIRRLVMEHLAVLGVEIDTEMNNRSNSFGERIVSSENARVICAVIPTNEEKMIALDAIHLGKVNAPAEFA</sequence>
<comment type="function">
    <text evidence="1">Catalyzes the conversion of propionyl phosphate and ADP to propionate and ATP.</text>
</comment>
<comment type="catalytic activity">
    <reaction evidence="1">
        <text>propanoate + ATP = propanoyl phosphate + ADP</text>
        <dbReference type="Rhea" id="RHEA:23148"/>
        <dbReference type="ChEBI" id="CHEBI:17272"/>
        <dbReference type="ChEBI" id="CHEBI:30616"/>
        <dbReference type="ChEBI" id="CHEBI:58933"/>
        <dbReference type="ChEBI" id="CHEBI:456216"/>
        <dbReference type="EC" id="2.7.2.15"/>
    </reaction>
</comment>
<comment type="cofactor">
    <cofactor evidence="1">
        <name>Mg(2+)</name>
        <dbReference type="ChEBI" id="CHEBI:18420"/>
    </cofactor>
</comment>
<comment type="pathway">
    <text evidence="1">Amino-acid degradation; L-threonine degradation via propanoate pathway; propanoate from L-threonine: step 4/4.</text>
</comment>
<comment type="subunit">
    <text evidence="1">Homodimer.</text>
</comment>
<comment type="similarity">
    <text evidence="1">Belongs to the acetokinase family. TdcD subfamily.</text>
</comment>
<comment type="sequence caution" evidence="2">
    <conflict type="erroneous initiation">
        <sequence resource="EMBL-CDS" id="AAN82314"/>
    </conflict>
    <text>Truncated N-terminus.</text>
</comment>
<feature type="chain" id="PRO_0000107654" description="Propionate kinase">
    <location>
        <begin position="1"/>
        <end position="402"/>
    </location>
</feature>
<feature type="active site" description="Proton donor/acceptor" evidence="1">
    <location>
        <position position="143"/>
    </location>
</feature>
<feature type="binding site" evidence="1">
    <location>
        <position position="11"/>
    </location>
    <ligand>
        <name>ATP</name>
        <dbReference type="ChEBI" id="CHEBI:30616"/>
    </ligand>
</feature>
<feature type="binding site" evidence="1">
    <location>
        <position position="11"/>
    </location>
    <ligand>
        <name>Mg(2+)</name>
        <dbReference type="ChEBI" id="CHEBI:18420"/>
    </ligand>
</feature>
<feature type="binding site" evidence="1">
    <location>
        <position position="18"/>
    </location>
    <ligand>
        <name>ATP</name>
        <dbReference type="ChEBI" id="CHEBI:30616"/>
    </ligand>
</feature>
<feature type="binding site" evidence="1">
    <location>
        <position position="86"/>
    </location>
    <ligand>
        <name>substrate</name>
    </ligand>
</feature>
<feature type="binding site" evidence="1">
    <location>
        <position position="175"/>
    </location>
    <ligand>
        <name>ATP</name>
        <dbReference type="ChEBI" id="CHEBI:30616"/>
    </ligand>
</feature>
<feature type="binding site" evidence="1">
    <location>
        <begin position="203"/>
        <end position="207"/>
    </location>
    <ligand>
        <name>ATP</name>
        <dbReference type="ChEBI" id="CHEBI:30616"/>
    </ligand>
</feature>
<feature type="binding site" evidence="1">
    <location>
        <begin position="278"/>
        <end position="280"/>
    </location>
    <ligand>
        <name>ATP</name>
        <dbReference type="ChEBI" id="CHEBI:30616"/>
    </ligand>
</feature>
<feature type="binding site" evidence="1">
    <location>
        <begin position="326"/>
        <end position="330"/>
    </location>
    <ligand>
        <name>ATP</name>
        <dbReference type="ChEBI" id="CHEBI:30616"/>
    </ligand>
</feature>
<feature type="site" description="Transition state stabilizer" evidence="1">
    <location>
        <position position="175"/>
    </location>
</feature>
<feature type="site" description="Transition state stabilizer" evidence="1">
    <location>
        <position position="236"/>
    </location>
</feature>
<evidence type="ECO:0000255" key="1">
    <source>
        <dbReference type="HAMAP-Rule" id="MF_01881"/>
    </source>
</evidence>
<evidence type="ECO:0000305" key="2"/>
<protein>
    <recommendedName>
        <fullName evidence="1">Propionate kinase</fullName>
        <ecNumber evidence="1">2.7.2.15</ecNumber>
    </recommendedName>
</protein>
<reference key="1">
    <citation type="journal article" date="2002" name="Proc. Natl. Acad. Sci. U.S.A.">
        <title>Extensive mosaic structure revealed by the complete genome sequence of uropathogenic Escherichia coli.</title>
        <authorList>
            <person name="Welch R.A."/>
            <person name="Burland V."/>
            <person name="Plunkett G. III"/>
            <person name="Redford P."/>
            <person name="Roesch P."/>
            <person name="Rasko D."/>
            <person name="Buckles E.L."/>
            <person name="Liou S.-R."/>
            <person name="Boutin A."/>
            <person name="Hackett J."/>
            <person name="Stroud D."/>
            <person name="Mayhew G.F."/>
            <person name="Rose D.J."/>
            <person name="Zhou S."/>
            <person name="Schwartz D.C."/>
            <person name="Perna N.T."/>
            <person name="Mobley H.L.T."/>
            <person name="Donnenberg M.S."/>
            <person name="Blattner F.R."/>
        </authorList>
    </citation>
    <scope>NUCLEOTIDE SEQUENCE [LARGE SCALE GENOMIC DNA]</scope>
    <source>
        <strain>CFT073 / ATCC 700928 / UPEC</strain>
    </source>
</reference>
<organism>
    <name type="scientific">Escherichia coli O6:H1 (strain CFT073 / ATCC 700928 / UPEC)</name>
    <dbReference type="NCBI Taxonomy" id="199310"/>
    <lineage>
        <taxon>Bacteria</taxon>
        <taxon>Pseudomonadati</taxon>
        <taxon>Pseudomonadota</taxon>
        <taxon>Gammaproteobacteria</taxon>
        <taxon>Enterobacterales</taxon>
        <taxon>Enterobacteriaceae</taxon>
        <taxon>Escherichia</taxon>
    </lineage>
</organism>
<proteinExistence type="inferred from homology"/>
<dbReference type="EC" id="2.7.2.15" evidence="1"/>
<dbReference type="EMBL" id="AE014075">
    <property type="protein sequence ID" value="AAN82314.1"/>
    <property type="status" value="ALT_INIT"/>
    <property type="molecule type" value="Genomic_DNA"/>
</dbReference>
<dbReference type="RefSeq" id="WP_001298325.1">
    <property type="nucleotide sequence ID" value="NZ_CP051263.1"/>
</dbReference>
<dbReference type="SMR" id="P59244"/>
<dbReference type="STRING" id="199310.c3873"/>
<dbReference type="KEGG" id="ecc:c3873"/>
<dbReference type="eggNOG" id="COG0282">
    <property type="taxonomic scope" value="Bacteria"/>
</dbReference>
<dbReference type="HOGENOM" id="CLU_209227_0_0_6"/>
<dbReference type="UniPathway" id="UPA00052">
    <property type="reaction ID" value="UER00510"/>
</dbReference>
<dbReference type="Proteomes" id="UP000001410">
    <property type="component" value="Chromosome"/>
</dbReference>
<dbReference type="GO" id="GO:0005829">
    <property type="term" value="C:cytosol"/>
    <property type="evidence" value="ECO:0007669"/>
    <property type="project" value="TreeGrafter"/>
</dbReference>
<dbReference type="GO" id="GO:0008776">
    <property type="term" value="F:acetate kinase activity"/>
    <property type="evidence" value="ECO:0007669"/>
    <property type="project" value="TreeGrafter"/>
</dbReference>
<dbReference type="GO" id="GO:0005524">
    <property type="term" value="F:ATP binding"/>
    <property type="evidence" value="ECO:0007669"/>
    <property type="project" value="UniProtKB-KW"/>
</dbReference>
<dbReference type="GO" id="GO:0046872">
    <property type="term" value="F:metal ion binding"/>
    <property type="evidence" value="ECO:0007669"/>
    <property type="project" value="UniProtKB-KW"/>
</dbReference>
<dbReference type="GO" id="GO:0008980">
    <property type="term" value="F:propionate kinase activity"/>
    <property type="evidence" value="ECO:0007669"/>
    <property type="project" value="UniProtKB-UniRule"/>
</dbReference>
<dbReference type="GO" id="GO:0006083">
    <property type="term" value="P:acetate metabolic process"/>
    <property type="evidence" value="ECO:0007669"/>
    <property type="project" value="TreeGrafter"/>
</dbReference>
<dbReference type="GO" id="GO:0070689">
    <property type="term" value="P:L-threonine catabolic process to propionate"/>
    <property type="evidence" value="ECO:0007669"/>
    <property type="project" value="UniProtKB-UniRule"/>
</dbReference>
<dbReference type="CDD" id="cd24010">
    <property type="entry name" value="ASKHA_NBD_AcK_PK"/>
    <property type="match status" value="1"/>
</dbReference>
<dbReference type="FunFam" id="3.30.420.40:FF:000165">
    <property type="entry name" value="Propionate kinase"/>
    <property type="match status" value="1"/>
</dbReference>
<dbReference type="Gene3D" id="3.30.420.40">
    <property type="match status" value="2"/>
</dbReference>
<dbReference type="HAMAP" id="MF_00020">
    <property type="entry name" value="Acetate_kinase"/>
    <property type="match status" value="1"/>
</dbReference>
<dbReference type="HAMAP" id="MF_01881">
    <property type="entry name" value="Propion_kin_subfam1"/>
    <property type="match status" value="1"/>
</dbReference>
<dbReference type="InterPro" id="IPR004372">
    <property type="entry name" value="Ac/propionate_kinase"/>
</dbReference>
<dbReference type="InterPro" id="IPR000890">
    <property type="entry name" value="Aliphatic_acid_kin_short-chain"/>
</dbReference>
<dbReference type="InterPro" id="IPR023865">
    <property type="entry name" value="Aliphatic_acid_kinase_CS"/>
</dbReference>
<dbReference type="InterPro" id="IPR043129">
    <property type="entry name" value="ATPase_NBD"/>
</dbReference>
<dbReference type="InterPro" id="IPR024917">
    <property type="entry name" value="Propionate_kinase"/>
</dbReference>
<dbReference type="NCBIfam" id="TIGR00016">
    <property type="entry name" value="ackA"/>
    <property type="match status" value="1"/>
</dbReference>
<dbReference type="NCBIfam" id="NF009045">
    <property type="entry name" value="PRK12379.1"/>
    <property type="match status" value="1"/>
</dbReference>
<dbReference type="PANTHER" id="PTHR21060">
    <property type="entry name" value="ACETATE KINASE"/>
    <property type="match status" value="1"/>
</dbReference>
<dbReference type="PANTHER" id="PTHR21060:SF17">
    <property type="entry name" value="PROPIONATE KINASE"/>
    <property type="match status" value="1"/>
</dbReference>
<dbReference type="Pfam" id="PF00871">
    <property type="entry name" value="Acetate_kinase"/>
    <property type="match status" value="1"/>
</dbReference>
<dbReference type="PIRSF" id="PIRSF000722">
    <property type="entry name" value="Acetate_prop_kin"/>
    <property type="match status" value="1"/>
</dbReference>
<dbReference type="PRINTS" id="PR00471">
    <property type="entry name" value="ACETATEKNASE"/>
</dbReference>
<dbReference type="SUPFAM" id="SSF53067">
    <property type="entry name" value="Actin-like ATPase domain"/>
    <property type="match status" value="2"/>
</dbReference>
<dbReference type="PROSITE" id="PS01075">
    <property type="entry name" value="ACETATE_KINASE_1"/>
    <property type="match status" value="1"/>
</dbReference>
<dbReference type="PROSITE" id="PS01076">
    <property type="entry name" value="ACETATE_KINASE_2"/>
    <property type="match status" value="1"/>
</dbReference>
<keyword id="KW-0067">ATP-binding</keyword>
<keyword id="KW-0418">Kinase</keyword>
<keyword id="KW-0460">Magnesium</keyword>
<keyword id="KW-0479">Metal-binding</keyword>
<keyword id="KW-0547">Nucleotide-binding</keyword>
<keyword id="KW-1185">Reference proteome</keyword>
<keyword id="KW-0808">Transferase</keyword>
<accession>P59244</accession>